<comment type="function">
    <text evidence="1">Catalyzes the conversion of 4-hydroxy-tetrahydrodipicolinate (HTPA) to tetrahydrodipicolinate.</text>
</comment>
<comment type="catalytic activity">
    <reaction evidence="1">
        <text>(S)-2,3,4,5-tetrahydrodipicolinate + NAD(+) + H2O = (2S,4S)-4-hydroxy-2,3,4,5-tetrahydrodipicolinate + NADH + H(+)</text>
        <dbReference type="Rhea" id="RHEA:35323"/>
        <dbReference type="ChEBI" id="CHEBI:15377"/>
        <dbReference type="ChEBI" id="CHEBI:15378"/>
        <dbReference type="ChEBI" id="CHEBI:16845"/>
        <dbReference type="ChEBI" id="CHEBI:57540"/>
        <dbReference type="ChEBI" id="CHEBI:57945"/>
        <dbReference type="ChEBI" id="CHEBI:67139"/>
        <dbReference type="EC" id="1.17.1.8"/>
    </reaction>
</comment>
<comment type="catalytic activity">
    <reaction evidence="1">
        <text>(S)-2,3,4,5-tetrahydrodipicolinate + NADP(+) + H2O = (2S,4S)-4-hydroxy-2,3,4,5-tetrahydrodipicolinate + NADPH + H(+)</text>
        <dbReference type="Rhea" id="RHEA:35331"/>
        <dbReference type="ChEBI" id="CHEBI:15377"/>
        <dbReference type="ChEBI" id="CHEBI:15378"/>
        <dbReference type="ChEBI" id="CHEBI:16845"/>
        <dbReference type="ChEBI" id="CHEBI:57783"/>
        <dbReference type="ChEBI" id="CHEBI:58349"/>
        <dbReference type="ChEBI" id="CHEBI:67139"/>
        <dbReference type="EC" id="1.17.1.8"/>
    </reaction>
</comment>
<comment type="pathway">
    <text evidence="1">Amino-acid biosynthesis; L-lysine biosynthesis via DAP pathway; (S)-tetrahydrodipicolinate from L-aspartate: step 4/4.</text>
</comment>
<comment type="subcellular location">
    <subcellularLocation>
        <location evidence="1">Cytoplasm</location>
    </subcellularLocation>
</comment>
<comment type="similarity">
    <text evidence="1">Belongs to the DapB family.</text>
</comment>
<comment type="caution">
    <text evidence="2">Was originally thought to be a dihydrodipicolinate reductase (DHDPR), catalyzing the conversion of dihydrodipicolinate to tetrahydrodipicolinate. However, it was shown in E.coli that the substrate of the enzymatic reaction is not dihydrodipicolinate (DHDP) but in fact (2S,4S)-4-hydroxy-2,3,4,5-tetrahydrodipicolinic acid (HTPA), the product released by the DapA-catalyzed reaction.</text>
</comment>
<gene>
    <name evidence="1" type="primary">dapB</name>
    <name type="ordered locus">HI_1308</name>
</gene>
<accession>P45153</accession>
<organism>
    <name type="scientific">Haemophilus influenzae (strain ATCC 51907 / DSM 11121 / KW20 / Rd)</name>
    <dbReference type="NCBI Taxonomy" id="71421"/>
    <lineage>
        <taxon>Bacteria</taxon>
        <taxon>Pseudomonadati</taxon>
        <taxon>Pseudomonadota</taxon>
        <taxon>Gammaproteobacteria</taxon>
        <taxon>Pasteurellales</taxon>
        <taxon>Pasteurellaceae</taxon>
        <taxon>Haemophilus</taxon>
    </lineage>
</organism>
<proteinExistence type="inferred from homology"/>
<protein>
    <recommendedName>
        <fullName evidence="1">4-hydroxy-tetrahydrodipicolinate reductase</fullName>
        <shortName evidence="1">HTPA reductase</shortName>
        <ecNumber evidence="1">1.17.1.8</ecNumber>
    </recommendedName>
</protein>
<dbReference type="EC" id="1.17.1.8" evidence="1"/>
<dbReference type="EMBL" id="L42023">
    <property type="protein sequence ID" value="AAC22955.1"/>
    <property type="molecule type" value="Genomic_DNA"/>
</dbReference>
<dbReference type="PIR" id="G64115">
    <property type="entry name" value="G64115"/>
</dbReference>
<dbReference type="RefSeq" id="NP_439459.1">
    <property type="nucleotide sequence ID" value="NC_000907.1"/>
</dbReference>
<dbReference type="SMR" id="P45153"/>
<dbReference type="STRING" id="71421.HI_1308"/>
<dbReference type="EnsemblBacteria" id="AAC22955">
    <property type="protein sequence ID" value="AAC22955"/>
    <property type="gene ID" value="HI_1308"/>
</dbReference>
<dbReference type="KEGG" id="hin:HI_1308"/>
<dbReference type="PATRIC" id="fig|71421.8.peg.1360"/>
<dbReference type="eggNOG" id="COG0289">
    <property type="taxonomic scope" value="Bacteria"/>
</dbReference>
<dbReference type="HOGENOM" id="CLU_047479_2_1_6"/>
<dbReference type="OrthoDB" id="9790352at2"/>
<dbReference type="PhylomeDB" id="P45153"/>
<dbReference type="BioCyc" id="HINF71421:G1GJ1-1333-MONOMER"/>
<dbReference type="UniPathway" id="UPA00034">
    <property type="reaction ID" value="UER00018"/>
</dbReference>
<dbReference type="Proteomes" id="UP000000579">
    <property type="component" value="Chromosome"/>
</dbReference>
<dbReference type="GO" id="GO:0005829">
    <property type="term" value="C:cytosol"/>
    <property type="evidence" value="ECO:0000318"/>
    <property type="project" value="GO_Central"/>
</dbReference>
<dbReference type="GO" id="GO:0008839">
    <property type="term" value="F:4-hydroxy-tetrahydrodipicolinate reductase"/>
    <property type="evidence" value="ECO:0000318"/>
    <property type="project" value="GO_Central"/>
</dbReference>
<dbReference type="GO" id="GO:0051287">
    <property type="term" value="F:NAD binding"/>
    <property type="evidence" value="ECO:0007669"/>
    <property type="project" value="UniProtKB-UniRule"/>
</dbReference>
<dbReference type="GO" id="GO:0050661">
    <property type="term" value="F:NADP binding"/>
    <property type="evidence" value="ECO:0007669"/>
    <property type="project" value="UniProtKB-UniRule"/>
</dbReference>
<dbReference type="GO" id="GO:0016726">
    <property type="term" value="F:oxidoreductase activity, acting on CH or CH2 groups, NAD or NADP as acceptor"/>
    <property type="evidence" value="ECO:0007669"/>
    <property type="project" value="UniProtKB-UniRule"/>
</dbReference>
<dbReference type="GO" id="GO:0019877">
    <property type="term" value="P:diaminopimelate biosynthetic process"/>
    <property type="evidence" value="ECO:0000318"/>
    <property type="project" value="GO_Central"/>
</dbReference>
<dbReference type="GO" id="GO:0009089">
    <property type="term" value="P:lysine biosynthetic process via diaminopimelate"/>
    <property type="evidence" value="ECO:0007669"/>
    <property type="project" value="UniProtKB-UniRule"/>
</dbReference>
<dbReference type="CDD" id="cd02274">
    <property type="entry name" value="DHDPR_N"/>
    <property type="match status" value="1"/>
</dbReference>
<dbReference type="FunFam" id="3.30.360.10:FF:000004">
    <property type="entry name" value="4-hydroxy-tetrahydrodipicolinate reductase"/>
    <property type="match status" value="1"/>
</dbReference>
<dbReference type="FunFam" id="3.40.50.720:FF:000048">
    <property type="entry name" value="4-hydroxy-tetrahydrodipicolinate reductase"/>
    <property type="match status" value="1"/>
</dbReference>
<dbReference type="Gene3D" id="3.30.360.10">
    <property type="entry name" value="Dihydrodipicolinate Reductase, domain 2"/>
    <property type="match status" value="1"/>
</dbReference>
<dbReference type="Gene3D" id="3.40.50.720">
    <property type="entry name" value="NAD(P)-binding Rossmann-like Domain"/>
    <property type="match status" value="1"/>
</dbReference>
<dbReference type="HAMAP" id="MF_00102">
    <property type="entry name" value="DapB"/>
    <property type="match status" value="1"/>
</dbReference>
<dbReference type="InterPro" id="IPR022663">
    <property type="entry name" value="DapB_C"/>
</dbReference>
<dbReference type="InterPro" id="IPR000846">
    <property type="entry name" value="DapB_N"/>
</dbReference>
<dbReference type="InterPro" id="IPR022664">
    <property type="entry name" value="DapB_N_CS"/>
</dbReference>
<dbReference type="InterPro" id="IPR023940">
    <property type="entry name" value="DHDPR_bac"/>
</dbReference>
<dbReference type="InterPro" id="IPR036291">
    <property type="entry name" value="NAD(P)-bd_dom_sf"/>
</dbReference>
<dbReference type="NCBIfam" id="TIGR00036">
    <property type="entry name" value="dapB"/>
    <property type="match status" value="1"/>
</dbReference>
<dbReference type="PANTHER" id="PTHR20836:SF0">
    <property type="entry name" value="4-HYDROXY-TETRAHYDRODIPICOLINATE REDUCTASE 1, CHLOROPLASTIC-RELATED"/>
    <property type="match status" value="1"/>
</dbReference>
<dbReference type="PANTHER" id="PTHR20836">
    <property type="entry name" value="DIHYDRODIPICOLINATE REDUCTASE"/>
    <property type="match status" value="1"/>
</dbReference>
<dbReference type="Pfam" id="PF05173">
    <property type="entry name" value="DapB_C"/>
    <property type="match status" value="1"/>
</dbReference>
<dbReference type="Pfam" id="PF01113">
    <property type="entry name" value="DapB_N"/>
    <property type="match status" value="1"/>
</dbReference>
<dbReference type="PIRSF" id="PIRSF000161">
    <property type="entry name" value="DHPR"/>
    <property type="match status" value="1"/>
</dbReference>
<dbReference type="SUPFAM" id="SSF55347">
    <property type="entry name" value="Glyceraldehyde-3-phosphate dehydrogenase-like, C-terminal domain"/>
    <property type="match status" value="1"/>
</dbReference>
<dbReference type="SUPFAM" id="SSF51735">
    <property type="entry name" value="NAD(P)-binding Rossmann-fold domains"/>
    <property type="match status" value="1"/>
</dbReference>
<dbReference type="PROSITE" id="PS01298">
    <property type="entry name" value="DAPB"/>
    <property type="match status" value="1"/>
</dbReference>
<keyword id="KW-0028">Amino-acid biosynthesis</keyword>
<keyword id="KW-0963">Cytoplasm</keyword>
<keyword id="KW-0220">Diaminopimelate biosynthesis</keyword>
<keyword id="KW-0457">Lysine biosynthesis</keyword>
<keyword id="KW-0520">NAD</keyword>
<keyword id="KW-0521">NADP</keyword>
<keyword id="KW-0560">Oxidoreductase</keyword>
<keyword id="KW-1185">Reference proteome</keyword>
<sequence>MTLKIAIAGAGGRMGCQLIQAVHSAEGVELGAAFERKGSSLVGTDAGELAGIGHLGVAVSDDLESQKDKFDLLIDFTRPEGTLEHIAFCVANNKKMVIGTTGFDENGKVAIKAASDKIAIVFASNFSVGVNLVFKLLEKAAKVMGDYCDIEVIEAHHRHKVDAPSGTALSMGEHIAKTLGRDLKTHGVFCREGITGERKRDEIGFSTIRASDVVGEHSVWFADIGERVEISHKASSRMTFANGAVRAGKWLENKANGLFDMTDVLDLNNL</sequence>
<feature type="chain" id="PRO_0000141443" description="4-hydroxy-tetrahydrodipicolinate reductase">
    <location>
        <begin position="1"/>
        <end position="270"/>
    </location>
</feature>
<feature type="active site" description="Proton donor/acceptor" evidence="1">
    <location>
        <position position="156"/>
    </location>
</feature>
<feature type="active site" description="Proton donor" evidence="1">
    <location>
        <position position="160"/>
    </location>
</feature>
<feature type="binding site" evidence="1">
    <location>
        <begin position="9"/>
        <end position="14"/>
    </location>
    <ligand>
        <name>NAD(+)</name>
        <dbReference type="ChEBI" id="CHEBI:57540"/>
    </ligand>
</feature>
<feature type="binding site" evidence="1">
    <location>
        <position position="35"/>
    </location>
    <ligand>
        <name>NAD(+)</name>
        <dbReference type="ChEBI" id="CHEBI:57540"/>
    </ligand>
</feature>
<feature type="binding site" evidence="1">
    <location>
        <position position="36"/>
    </location>
    <ligand>
        <name>NADP(+)</name>
        <dbReference type="ChEBI" id="CHEBI:58349"/>
    </ligand>
</feature>
<feature type="binding site" evidence="1">
    <location>
        <begin position="99"/>
        <end position="101"/>
    </location>
    <ligand>
        <name>NAD(+)</name>
        <dbReference type="ChEBI" id="CHEBI:57540"/>
    </ligand>
</feature>
<feature type="binding site" evidence="1">
    <location>
        <begin position="123"/>
        <end position="126"/>
    </location>
    <ligand>
        <name>NAD(+)</name>
        <dbReference type="ChEBI" id="CHEBI:57540"/>
    </ligand>
</feature>
<feature type="binding site" evidence="1">
    <location>
        <position position="157"/>
    </location>
    <ligand>
        <name>(S)-2,3,4,5-tetrahydrodipicolinate</name>
        <dbReference type="ChEBI" id="CHEBI:16845"/>
    </ligand>
</feature>
<feature type="binding site" evidence="1">
    <location>
        <begin position="166"/>
        <end position="167"/>
    </location>
    <ligand>
        <name>(S)-2,3,4,5-tetrahydrodipicolinate</name>
        <dbReference type="ChEBI" id="CHEBI:16845"/>
    </ligand>
</feature>
<name>DAPB_HAEIN</name>
<evidence type="ECO:0000255" key="1">
    <source>
        <dbReference type="HAMAP-Rule" id="MF_00102"/>
    </source>
</evidence>
<evidence type="ECO:0000305" key="2"/>
<reference key="1">
    <citation type="journal article" date="1995" name="Science">
        <title>Whole-genome random sequencing and assembly of Haemophilus influenzae Rd.</title>
        <authorList>
            <person name="Fleischmann R.D."/>
            <person name="Adams M.D."/>
            <person name="White O."/>
            <person name="Clayton R.A."/>
            <person name="Kirkness E.F."/>
            <person name="Kerlavage A.R."/>
            <person name="Bult C.J."/>
            <person name="Tomb J.-F."/>
            <person name="Dougherty B.A."/>
            <person name="Merrick J.M."/>
            <person name="McKenney K."/>
            <person name="Sutton G.G."/>
            <person name="FitzHugh W."/>
            <person name="Fields C.A."/>
            <person name="Gocayne J.D."/>
            <person name="Scott J.D."/>
            <person name="Shirley R."/>
            <person name="Liu L.-I."/>
            <person name="Glodek A."/>
            <person name="Kelley J.M."/>
            <person name="Weidman J.F."/>
            <person name="Phillips C.A."/>
            <person name="Spriggs T."/>
            <person name="Hedblom E."/>
            <person name="Cotton M.D."/>
            <person name="Utterback T.R."/>
            <person name="Hanna M.C."/>
            <person name="Nguyen D.T."/>
            <person name="Saudek D.M."/>
            <person name="Brandon R.C."/>
            <person name="Fine L.D."/>
            <person name="Fritchman J.L."/>
            <person name="Fuhrmann J.L."/>
            <person name="Geoghagen N.S.M."/>
            <person name="Gnehm C.L."/>
            <person name="McDonald L.A."/>
            <person name="Small K.V."/>
            <person name="Fraser C.M."/>
            <person name="Smith H.O."/>
            <person name="Venter J.C."/>
        </authorList>
    </citation>
    <scope>NUCLEOTIDE SEQUENCE [LARGE SCALE GENOMIC DNA]</scope>
    <source>
        <strain>ATCC 51907 / DSM 11121 / KW20 / Rd</strain>
    </source>
</reference>